<name>KHSE_HALLT</name>
<gene>
    <name evidence="1" type="primary">thrB</name>
    <name type="ordered locus">Hlac_2302</name>
</gene>
<keyword id="KW-0028">Amino-acid biosynthesis</keyword>
<keyword id="KW-0067">ATP-binding</keyword>
<keyword id="KW-0963">Cytoplasm</keyword>
<keyword id="KW-0418">Kinase</keyword>
<keyword id="KW-0547">Nucleotide-binding</keyword>
<keyword id="KW-1185">Reference proteome</keyword>
<keyword id="KW-0791">Threonine biosynthesis</keyword>
<keyword id="KW-0808">Transferase</keyword>
<evidence type="ECO:0000255" key="1">
    <source>
        <dbReference type="HAMAP-Rule" id="MF_00384"/>
    </source>
</evidence>
<reference key="1">
    <citation type="journal article" date="2016" name="Stand. Genomic Sci.">
        <title>Complete genome sequence of the Antarctic Halorubrum lacusprofundi type strain ACAM 34.</title>
        <authorList>
            <person name="Anderson I.J."/>
            <person name="DasSarma P."/>
            <person name="Lucas S."/>
            <person name="Copeland A."/>
            <person name="Lapidus A."/>
            <person name="Del Rio T.G."/>
            <person name="Tice H."/>
            <person name="Dalin E."/>
            <person name="Bruce D.C."/>
            <person name="Goodwin L."/>
            <person name="Pitluck S."/>
            <person name="Sims D."/>
            <person name="Brettin T.S."/>
            <person name="Detter J.C."/>
            <person name="Han C.S."/>
            <person name="Larimer F."/>
            <person name="Hauser L."/>
            <person name="Land M."/>
            <person name="Ivanova N."/>
            <person name="Richardson P."/>
            <person name="Cavicchioli R."/>
            <person name="DasSarma S."/>
            <person name="Woese C.R."/>
            <person name="Kyrpides N.C."/>
        </authorList>
    </citation>
    <scope>NUCLEOTIDE SEQUENCE [LARGE SCALE GENOMIC DNA]</scope>
    <source>
        <strain>ATCC 49239 / DSM 5036 / JCM 8891 / ACAM 34</strain>
    </source>
</reference>
<dbReference type="EC" id="2.7.1.39" evidence="1"/>
<dbReference type="EMBL" id="CP001365">
    <property type="protein sequence ID" value="ACM57878.1"/>
    <property type="molecule type" value="Genomic_DNA"/>
</dbReference>
<dbReference type="RefSeq" id="WP_015910999.1">
    <property type="nucleotide sequence ID" value="NC_012029.1"/>
</dbReference>
<dbReference type="SMR" id="B9LS04"/>
<dbReference type="GeneID" id="7401918"/>
<dbReference type="KEGG" id="hla:Hlac_2302"/>
<dbReference type="eggNOG" id="arCOG01027">
    <property type="taxonomic scope" value="Archaea"/>
</dbReference>
<dbReference type="HOGENOM" id="CLU_041243_1_1_2"/>
<dbReference type="UniPathway" id="UPA00050">
    <property type="reaction ID" value="UER00064"/>
</dbReference>
<dbReference type="Proteomes" id="UP000000740">
    <property type="component" value="Chromosome 1"/>
</dbReference>
<dbReference type="GO" id="GO:0005737">
    <property type="term" value="C:cytoplasm"/>
    <property type="evidence" value="ECO:0007669"/>
    <property type="project" value="UniProtKB-SubCell"/>
</dbReference>
<dbReference type="GO" id="GO:0005524">
    <property type="term" value="F:ATP binding"/>
    <property type="evidence" value="ECO:0007669"/>
    <property type="project" value="UniProtKB-UniRule"/>
</dbReference>
<dbReference type="GO" id="GO:0004413">
    <property type="term" value="F:homoserine kinase activity"/>
    <property type="evidence" value="ECO:0007669"/>
    <property type="project" value="UniProtKB-UniRule"/>
</dbReference>
<dbReference type="GO" id="GO:0009088">
    <property type="term" value="P:threonine biosynthetic process"/>
    <property type="evidence" value="ECO:0007669"/>
    <property type="project" value="UniProtKB-UniRule"/>
</dbReference>
<dbReference type="Gene3D" id="3.30.230.10">
    <property type="match status" value="1"/>
</dbReference>
<dbReference type="Gene3D" id="3.30.70.890">
    <property type="entry name" value="GHMP kinase, C-terminal domain"/>
    <property type="match status" value="1"/>
</dbReference>
<dbReference type="HAMAP" id="MF_00384">
    <property type="entry name" value="Homoser_kinase"/>
    <property type="match status" value="1"/>
</dbReference>
<dbReference type="InterPro" id="IPR013750">
    <property type="entry name" value="GHMP_kinase_C_dom"/>
</dbReference>
<dbReference type="InterPro" id="IPR036554">
    <property type="entry name" value="GHMP_kinase_C_sf"/>
</dbReference>
<dbReference type="InterPro" id="IPR006204">
    <property type="entry name" value="GHMP_kinase_N_dom"/>
</dbReference>
<dbReference type="InterPro" id="IPR000870">
    <property type="entry name" value="Homoserine_kinase"/>
</dbReference>
<dbReference type="InterPro" id="IPR020568">
    <property type="entry name" value="Ribosomal_Su5_D2-typ_SF"/>
</dbReference>
<dbReference type="InterPro" id="IPR014721">
    <property type="entry name" value="Ribsml_uS5_D2-typ_fold_subgr"/>
</dbReference>
<dbReference type="NCBIfam" id="NF002288">
    <property type="entry name" value="PRK01212.1-4"/>
    <property type="match status" value="1"/>
</dbReference>
<dbReference type="NCBIfam" id="TIGR00191">
    <property type="entry name" value="thrB"/>
    <property type="match status" value="1"/>
</dbReference>
<dbReference type="PANTHER" id="PTHR20861:SF1">
    <property type="entry name" value="HOMOSERINE KINASE"/>
    <property type="match status" value="1"/>
</dbReference>
<dbReference type="PANTHER" id="PTHR20861">
    <property type="entry name" value="HOMOSERINE/4-DIPHOSPHOCYTIDYL-2-C-METHYL-D-ERYTHRITOL KINASE"/>
    <property type="match status" value="1"/>
</dbReference>
<dbReference type="Pfam" id="PF08544">
    <property type="entry name" value="GHMP_kinases_C"/>
    <property type="match status" value="1"/>
</dbReference>
<dbReference type="Pfam" id="PF00288">
    <property type="entry name" value="GHMP_kinases_N"/>
    <property type="match status" value="1"/>
</dbReference>
<dbReference type="PIRSF" id="PIRSF000676">
    <property type="entry name" value="Homoser_kin"/>
    <property type="match status" value="1"/>
</dbReference>
<dbReference type="PRINTS" id="PR00958">
    <property type="entry name" value="HOMSERKINASE"/>
</dbReference>
<dbReference type="SUPFAM" id="SSF55060">
    <property type="entry name" value="GHMP Kinase, C-terminal domain"/>
    <property type="match status" value="1"/>
</dbReference>
<dbReference type="SUPFAM" id="SSF54211">
    <property type="entry name" value="Ribosomal protein S5 domain 2-like"/>
    <property type="match status" value="1"/>
</dbReference>
<protein>
    <recommendedName>
        <fullName evidence="1">Homoserine kinase</fullName>
        <shortName evidence="1">HK</shortName>
        <shortName evidence="1">HSK</shortName>
        <ecNumber evidence="1">2.7.1.39</ecNumber>
    </recommendedName>
</protein>
<organism>
    <name type="scientific">Halorubrum lacusprofundi (strain ATCC 49239 / DSM 5036 / JCM 8891 / ACAM 34)</name>
    <dbReference type="NCBI Taxonomy" id="416348"/>
    <lineage>
        <taxon>Archaea</taxon>
        <taxon>Methanobacteriati</taxon>
        <taxon>Methanobacteriota</taxon>
        <taxon>Stenosarchaea group</taxon>
        <taxon>Halobacteria</taxon>
        <taxon>Halobacteriales</taxon>
        <taxon>Haloferacaceae</taxon>
        <taxon>Halorubrum</taxon>
    </lineage>
</organism>
<comment type="function">
    <text evidence="1">Catalyzes the ATP-dependent phosphorylation of L-homoserine to L-homoserine phosphate.</text>
</comment>
<comment type="catalytic activity">
    <reaction evidence="1">
        <text>L-homoserine + ATP = O-phospho-L-homoserine + ADP + H(+)</text>
        <dbReference type="Rhea" id="RHEA:13985"/>
        <dbReference type="ChEBI" id="CHEBI:15378"/>
        <dbReference type="ChEBI" id="CHEBI:30616"/>
        <dbReference type="ChEBI" id="CHEBI:57476"/>
        <dbReference type="ChEBI" id="CHEBI:57590"/>
        <dbReference type="ChEBI" id="CHEBI:456216"/>
        <dbReference type="EC" id="2.7.1.39"/>
    </reaction>
</comment>
<comment type="pathway">
    <text evidence="1">Amino-acid biosynthesis; L-threonine biosynthesis; L-threonine from L-aspartate: step 4/5.</text>
</comment>
<comment type="subcellular location">
    <subcellularLocation>
        <location evidence="1">Cytoplasm</location>
    </subcellularLocation>
</comment>
<comment type="similarity">
    <text evidence="1">Belongs to the GHMP kinase family. Homoserine kinase subfamily.</text>
</comment>
<accession>B9LS04</accession>
<proteinExistence type="inferred from homology"/>
<feature type="chain" id="PRO_1000134252" description="Homoserine kinase">
    <location>
        <begin position="1"/>
        <end position="293"/>
    </location>
</feature>
<feature type="binding site" evidence="1">
    <location>
        <begin position="80"/>
        <end position="90"/>
    </location>
    <ligand>
        <name>ATP</name>
        <dbReference type="ChEBI" id="CHEBI:30616"/>
    </ligand>
</feature>
<sequence>MVTVRAPATSANLGSGFDVFGAALTRPADVVTVEKAAETTIEVTGVGAQYIPEDPKKNTVGAVVEALDAPARIHIDKGVRPASGLGSSAASAAGAAVALNRLYDRGLSRSELVPIAAEGEAVVSGVAHSDNVAPSILGGFTVTTSEGTHAVDASIPLVVCLPDVAVSTRDARRVVPETASMDDLVETVGNAATLAIGMCRSDPDLVGAGMSDPVVTPERARLITGYDEVRAAAFDAGATGVTVSGAGPAILAVCRDGQRRGVAAAMLDAFSDAGIDSRAYQTRIGRGSTVLEE</sequence>